<comment type="function">
    <text evidence="1">The glycine cleavage system catalyzes the degradation of glycine. The P protein binds the alpha-amino group of glycine through its pyridoxal phosphate cofactor; CO(2) is released and the remaining methylamine moiety is then transferred to the lipoamide cofactor of the H protein.</text>
</comment>
<comment type="catalytic activity">
    <reaction evidence="1">
        <text>N(6)-[(R)-lipoyl]-L-lysyl-[glycine-cleavage complex H protein] + glycine + H(+) = N(6)-[(R)-S(8)-aminomethyldihydrolipoyl]-L-lysyl-[glycine-cleavage complex H protein] + CO2</text>
        <dbReference type="Rhea" id="RHEA:24304"/>
        <dbReference type="Rhea" id="RHEA-COMP:10494"/>
        <dbReference type="Rhea" id="RHEA-COMP:10495"/>
        <dbReference type="ChEBI" id="CHEBI:15378"/>
        <dbReference type="ChEBI" id="CHEBI:16526"/>
        <dbReference type="ChEBI" id="CHEBI:57305"/>
        <dbReference type="ChEBI" id="CHEBI:83099"/>
        <dbReference type="ChEBI" id="CHEBI:83143"/>
        <dbReference type="EC" id="1.4.4.2"/>
    </reaction>
</comment>
<comment type="subunit">
    <text evidence="1">The glycine cleavage system is composed of four proteins: P, T, L and H. In this organism, the P 'protein' is a heterodimer of two subunits.</text>
</comment>
<comment type="similarity">
    <text evidence="1">Belongs to the GcvP family. N-terminal subunit subfamily.</text>
</comment>
<sequence>MPFIPHTPDDIEKMLAVIGAESIDQLFDEIPSALANIQQVPPGLNEAGITRLMEKREPNKQLCFIGAGAYEHHIPAAVWEIATRGEFYTAYTPYQAEASQGSLQLIYEYQTMMAELMAMDVSNASLYDGASALAEAALMAVRIKRGKAQRILVPASVNPFYRKVLSSIVEQQKINVEIIPFDPTMGIVNSELLKAKNAEGAAAIIIPQPNFFGCLEAVDVLTDWAHANDLLVIASVNPTAMALLKPPGQWGQKGADIVCGEGQPLGVPLASGGPYFGFMCCKKDYVRQLPGRIVGRTVDKKGREGFTLTLQAREQHIRRSKATSNICTNQGLAVVAATIYLSLLGATGLREVALASHTQSRDLFQRLSAVKGVSPVFSSPIFHEFVVRLEKPVEEVLAAMAEQGIQAGFSLKNDYPKLGNGLLICVTDTKTDDDLMAYENALRSIQ</sequence>
<protein>
    <recommendedName>
        <fullName evidence="1">Probable glycine dehydrogenase (decarboxylating) subunit 1</fullName>
        <ecNumber evidence="1">1.4.4.2</ecNumber>
    </recommendedName>
    <alternativeName>
        <fullName evidence="1">Glycine cleavage system P-protein subunit 1</fullName>
    </alternativeName>
    <alternativeName>
        <fullName evidence="1">Glycine decarboxylase subunit 1</fullName>
    </alternativeName>
    <alternativeName>
        <fullName evidence="1">Glycine dehydrogenase (aminomethyl-transferring) subunit 1</fullName>
    </alternativeName>
</protein>
<proteinExistence type="inferred from homology"/>
<reference key="1">
    <citation type="journal article" date="2009" name="Infect. Immun.">
        <title>Comparative genomics reveal extensive transposon-mediated genomic plasticity and diversity among potential effector proteins within the genus Coxiella.</title>
        <authorList>
            <person name="Beare P.A."/>
            <person name="Unsworth N."/>
            <person name="Andoh M."/>
            <person name="Voth D.E."/>
            <person name="Omsland A."/>
            <person name="Gilk S.D."/>
            <person name="Williams K.P."/>
            <person name="Sobral B.W."/>
            <person name="Kupko J.J. III"/>
            <person name="Porcella S.F."/>
            <person name="Samuel J.E."/>
            <person name="Heinzen R.A."/>
        </authorList>
    </citation>
    <scope>NUCLEOTIDE SEQUENCE [LARGE SCALE GENOMIC DNA]</scope>
    <source>
        <strain>CbuG_Q212</strain>
    </source>
</reference>
<keyword id="KW-0560">Oxidoreductase</keyword>
<dbReference type="EC" id="1.4.4.2" evidence="1"/>
<dbReference type="EMBL" id="CP001019">
    <property type="protein sequence ID" value="ACJ17551.1"/>
    <property type="molecule type" value="Genomic_DNA"/>
</dbReference>
<dbReference type="RefSeq" id="WP_005770511.1">
    <property type="nucleotide sequence ID" value="NC_011527.1"/>
</dbReference>
<dbReference type="SMR" id="B6J2H7"/>
<dbReference type="KEGG" id="cbg:CbuG_0096"/>
<dbReference type="HOGENOM" id="CLU_004620_0_2_6"/>
<dbReference type="GO" id="GO:0004375">
    <property type="term" value="F:glycine dehydrogenase (decarboxylating) activity"/>
    <property type="evidence" value="ECO:0007669"/>
    <property type="project" value="UniProtKB-EC"/>
</dbReference>
<dbReference type="GO" id="GO:0019464">
    <property type="term" value="P:glycine decarboxylation via glycine cleavage system"/>
    <property type="evidence" value="ECO:0007669"/>
    <property type="project" value="UniProtKB-UniRule"/>
</dbReference>
<dbReference type="GO" id="GO:0009116">
    <property type="term" value="P:nucleoside metabolic process"/>
    <property type="evidence" value="ECO:0007669"/>
    <property type="project" value="InterPro"/>
</dbReference>
<dbReference type="CDD" id="cd00613">
    <property type="entry name" value="GDC-P"/>
    <property type="match status" value="1"/>
</dbReference>
<dbReference type="FunFam" id="3.40.640.10:FF:000113">
    <property type="entry name" value="Probable glycine dehydrogenase (decarboxylating) subunit 1"/>
    <property type="match status" value="1"/>
</dbReference>
<dbReference type="Gene3D" id="3.90.1150.10">
    <property type="entry name" value="Aspartate Aminotransferase, domain 1"/>
    <property type="match status" value="1"/>
</dbReference>
<dbReference type="Gene3D" id="3.40.640.10">
    <property type="entry name" value="Type I PLP-dependent aspartate aminotransferase-like (Major domain)"/>
    <property type="match status" value="1"/>
</dbReference>
<dbReference type="HAMAP" id="MF_00712">
    <property type="entry name" value="GcvPA"/>
    <property type="match status" value="1"/>
</dbReference>
<dbReference type="InterPro" id="IPR023010">
    <property type="entry name" value="GcvPA"/>
</dbReference>
<dbReference type="InterPro" id="IPR049315">
    <property type="entry name" value="GDC-P_N"/>
</dbReference>
<dbReference type="InterPro" id="IPR020581">
    <property type="entry name" value="GDC_P"/>
</dbReference>
<dbReference type="InterPro" id="IPR015424">
    <property type="entry name" value="PyrdxlP-dep_Trfase"/>
</dbReference>
<dbReference type="InterPro" id="IPR015421">
    <property type="entry name" value="PyrdxlP-dep_Trfase_major"/>
</dbReference>
<dbReference type="InterPro" id="IPR015422">
    <property type="entry name" value="PyrdxlP-dep_Trfase_small"/>
</dbReference>
<dbReference type="NCBIfam" id="NF001696">
    <property type="entry name" value="PRK00451.1"/>
    <property type="match status" value="1"/>
</dbReference>
<dbReference type="PANTHER" id="PTHR42806">
    <property type="entry name" value="GLYCINE CLEAVAGE SYSTEM P-PROTEIN"/>
    <property type="match status" value="1"/>
</dbReference>
<dbReference type="PANTHER" id="PTHR42806:SF1">
    <property type="entry name" value="GLYCINE DEHYDROGENASE (DECARBOXYLATING)"/>
    <property type="match status" value="1"/>
</dbReference>
<dbReference type="Pfam" id="PF02347">
    <property type="entry name" value="GDC-P"/>
    <property type="match status" value="1"/>
</dbReference>
<dbReference type="PIRSF" id="PIRSF006815">
    <property type="entry name" value="GcvPA"/>
    <property type="match status" value="1"/>
</dbReference>
<dbReference type="SUPFAM" id="SSF53383">
    <property type="entry name" value="PLP-dependent transferases"/>
    <property type="match status" value="1"/>
</dbReference>
<name>GCSPA_COXB2</name>
<organism>
    <name type="scientific">Coxiella burnetii (strain CbuG_Q212)</name>
    <name type="common">Coxiella burnetii (strain Q212)</name>
    <dbReference type="NCBI Taxonomy" id="434923"/>
    <lineage>
        <taxon>Bacteria</taxon>
        <taxon>Pseudomonadati</taxon>
        <taxon>Pseudomonadota</taxon>
        <taxon>Gammaproteobacteria</taxon>
        <taxon>Legionellales</taxon>
        <taxon>Coxiellaceae</taxon>
        <taxon>Coxiella</taxon>
    </lineage>
</organism>
<gene>
    <name evidence="1" type="primary">gcvPA</name>
    <name type="ordered locus">CbuG_0096</name>
</gene>
<evidence type="ECO:0000255" key="1">
    <source>
        <dbReference type="HAMAP-Rule" id="MF_00712"/>
    </source>
</evidence>
<accession>B6J2H7</accession>
<feature type="chain" id="PRO_1000132477" description="Probable glycine dehydrogenase (decarboxylating) subunit 1">
    <location>
        <begin position="1"/>
        <end position="446"/>
    </location>
</feature>